<gene>
    <name evidence="1" type="primary">aroL</name>
    <name type="ordered locus">YPTS_0952</name>
</gene>
<organism>
    <name type="scientific">Yersinia pseudotuberculosis serotype IB (strain PB1/+)</name>
    <dbReference type="NCBI Taxonomy" id="502801"/>
    <lineage>
        <taxon>Bacteria</taxon>
        <taxon>Pseudomonadati</taxon>
        <taxon>Pseudomonadota</taxon>
        <taxon>Gammaproteobacteria</taxon>
        <taxon>Enterobacterales</taxon>
        <taxon>Yersiniaceae</taxon>
        <taxon>Yersinia</taxon>
    </lineage>
</organism>
<feature type="chain" id="PRO_1000140146" description="Shikimate kinase 2">
    <location>
        <begin position="1"/>
        <end position="174"/>
    </location>
</feature>
<feature type="region of interest" description="LID domain">
    <location>
        <begin position="112"/>
        <end position="126"/>
    </location>
</feature>
<feature type="binding site" evidence="1">
    <location>
        <begin position="12"/>
        <end position="17"/>
    </location>
    <ligand>
        <name>ATP</name>
        <dbReference type="ChEBI" id="CHEBI:30616"/>
    </ligand>
</feature>
<feature type="binding site" evidence="1">
    <location>
        <position position="16"/>
    </location>
    <ligand>
        <name>Mg(2+)</name>
        <dbReference type="ChEBI" id="CHEBI:18420"/>
    </ligand>
</feature>
<feature type="binding site" evidence="1">
    <location>
        <position position="32"/>
    </location>
    <ligand>
        <name>Mg(2+)</name>
        <dbReference type="ChEBI" id="CHEBI:18420"/>
    </ligand>
</feature>
<feature type="binding site" evidence="1">
    <location>
        <position position="34"/>
    </location>
    <ligand>
        <name>substrate</name>
    </ligand>
</feature>
<feature type="binding site" evidence="1">
    <location>
        <position position="58"/>
    </location>
    <ligand>
        <name>substrate</name>
    </ligand>
</feature>
<feature type="binding site" evidence="1">
    <location>
        <position position="79"/>
    </location>
    <ligand>
        <name>substrate</name>
    </ligand>
</feature>
<feature type="binding site" evidence="1">
    <location>
        <position position="120"/>
    </location>
    <ligand>
        <name>ATP</name>
        <dbReference type="ChEBI" id="CHEBI:30616"/>
    </ligand>
</feature>
<feature type="binding site" evidence="1">
    <location>
        <position position="139"/>
    </location>
    <ligand>
        <name>substrate</name>
    </ligand>
</feature>
<feature type="binding site" evidence="1">
    <location>
        <position position="155"/>
    </location>
    <ligand>
        <name>ATP</name>
        <dbReference type="ChEBI" id="CHEBI:30616"/>
    </ligand>
</feature>
<comment type="function">
    <text evidence="1">Catalyzes the specific phosphorylation of the 3-hydroxyl group of shikimic acid using ATP as a cosubstrate.</text>
</comment>
<comment type="catalytic activity">
    <reaction evidence="1">
        <text>shikimate + ATP = 3-phosphoshikimate + ADP + H(+)</text>
        <dbReference type="Rhea" id="RHEA:13121"/>
        <dbReference type="ChEBI" id="CHEBI:15378"/>
        <dbReference type="ChEBI" id="CHEBI:30616"/>
        <dbReference type="ChEBI" id="CHEBI:36208"/>
        <dbReference type="ChEBI" id="CHEBI:145989"/>
        <dbReference type="ChEBI" id="CHEBI:456216"/>
        <dbReference type="EC" id="2.7.1.71"/>
    </reaction>
</comment>
<comment type="cofactor">
    <cofactor evidence="1">
        <name>Mg(2+)</name>
        <dbReference type="ChEBI" id="CHEBI:18420"/>
    </cofactor>
    <text evidence="1">Binds 1 Mg(2+) ion per subunit.</text>
</comment>
<comment type="pathway">
    <text evidence="1">Metabolic intermediate biosynthesis; chorismate biosynthesis; chorismate from D-erythrose 4-phosphate and phosphoenolpyruvate: step 5/7.</text>
</comment>
<comment type="subunit">
    <text evidence="1">Monomer.</text>
</comment>
<comment type="subcellular location">
    <subcellularLocation>
        <location evidence="1">Cytoplasm</location>
    </subcellularLocation>
</comment>
<comment type="domain">
    <text evidence="1">The LID domain closes over the active site upon ATP binding.</text>
</comment>
<comment type="similarity">
    <text evidence="1">Belongs to the shikimate kinase family. AroL subfamily.</text>
</comment>
<name>AROL_YERPB</name>
<sequence>MTQTIFMVGARGAGKTTIGKALAQALGYRFVDTDLFMQQTSQMTVAEVVESEGWDGFRLRESMALQAVTAPKTVIATGGGAVLSSENRAFMRDHGRVIYLRASAAVLAKRLAEDPEEAQRPSLTGKPIVEEMLDVLASREALYQDVAHHVLDGTQTPSLVVEQILQMLTGEMVK</sequence>
<protein>
    <recommendedName>
        <fullName evidence="1">Shikimate kinase 2</fullName>
        <shortName evidence="1">SK 2</shortName>
        <ecNumber evidence="1">2.7.1.71</ecNumber>
    </recommendedName>
</protein>
<evidence type="ECO:0000255" key="1">
    <source>
        <dbReference type="HAMAP-Rule" id="MF_01269"/>
    </source>
</evidence>
<keyword id="KW-0028">Amino-acid biosynthesis</keyword>
<keyword id="KW-0057">Aromatic amino acid biosynthesis</keyword>
<keyword id="KW-0067">ATP-binding</keyword>
<keyword id="KW-0963">Cytoplasm</keyword>
<keyword id="KW-0418">Kinase</keyword>
<keyword id="KW-0460">Magnesium</keyword>
<keyword id="KW-0479">Metal-binding</keyword>
<keyword id="KW-0547">Nucleotide-binding</keyword>
<keyword id="KW-0808">Transferase</keyword>
<proteinExistence type="inferred from homology"/>
<dbReference type="EC" id="2.7.1.71" evidence="1"/>
<dbReference type="EMBL" id="CP001048">
    <property type="protein sequence ID" value="ACC87933.1"/>
    <property type="molecule type" value="Genomic_DNA"/>
</dbReference>
<dbReference type="RefSeq" id="WP_011191851.1">
    <property type="nucleotide sequence ID" value="NZ_CP009780.1"/>
</dbReference>
<dbReference type="SMR" id="B2K6Q9"/>
<dbReference type="GeneID" id="49787035"/>
<dbReference type="KEGG" id="ypb:YPTS_0952"/>
<dbReference type="PATRIC" id="fig|502801.10.peg.291"/>
<dbReference type="UniPathway" id="UPA00053">
    <property type="reaction ID" value="UER00088"/>
</dbReference>
<dbReference type="GO" id="GO:0005829">
    <property type="term" value="C:cytosol"/>
    <property type="evidence" value="ECO:0007669"/>
    <property type="project" value="TreeGrafter"/>
</dbReference>
<dbReference type="GO" id="GO:0005524">
    <property type="term" value="F:ATP binding"/>
    <property type="evidence" value="ECO:0007669"/>
    <property type="project" value="UniProtKB-UniRule"/>
</dbReference>
<dbReference type="GO" id="GO:0000287">
    <property type="term" value="F:magnesium ion binding"/>
    <property type="evidence" value="ECO:0007669"/>
    <property type="project" value="UniProtKB-UniRule"/>
</dbReference>
<dbReference type="GO" id="GO:0004765">
    <property type="term" value="F:shikimate kinase activity"/>
    <property type="evidence" value="ECO:0007669"/>
    <property type="project" value="UniProtKB-UniRule"/>
</dbReference>
<dbReference type="GO" id="GO:0008652">
    <property type="term" value="P:amino acid biosynthetic process"/>
    <property type="evidence" value="ECO:0007669"/>
    <property type="project" value="UniProtKB-KW"/>
</dbReference>
<dbReference type="GO" id="GO:0009073">
    <property type="term" value="P:aromatic amino acid family biosynthetic process"/>
    <property type="evidence" value="ECO:0007669"/>
    <property type="project" value="UniProtKB-KW"/>
</dbReference>
<dbReference type="GO" id="GO:0009423">
    <property type="term" value="P:chorismate biosynthetic process"/>
    <property type="evidence" value="ECO:0007669"/>
    <property type="project" value="UniProtKB-UniRule"/>
</dbReference>
<dbReference type="CDD" id="cd00464">
    <property type="entry name" value="SK"/>
    <property type="match status" value="1"/>
</dbReference>
<dbReference type="Gene3D" id="3.40.50.300">
    <property type="entry name" value="P-loop containing nucleotide triphosphate hydrolases"/>
    <property type="match status" value="1"/>
</dbReference>
<dbReference type="HAMAP" id="MF_00109">
    <property type="entry name" value="Shikimate_kinase"/>
    <property type="match status" value="1"/>
</dbReference>
<dbReference type="HAMAP" id="MF_01269">
    <property type="entry name" value="Shikimate_kinase_2"/>
    <property type="match status" value="1"/>
</dbReference>
<dbReference type="InterPro" id="IPR027417">
    <property type="entry name" value="P-loop_NTPase"/>
</dbReference>
<dbReference type="InterPro" id="IPR031322">
    <property type="entry name" value="Shikimate/glucono_kinase"/>
</dbReference>
<dbReference type="InterPro" id="IPR000623">
    <property type="entry name" value="Shikimate_kinase/TSH1"/>
</dbReference>
<dbReference type="InterPro" id="IPR027544">
    <property type="entry name" value="Shikimate_kinase_2"/>
</dbReference>
<dbReference type="InterPro" id="IPR023000">
    <property type="entry name" value="Shikimate_kinase_CS"/>
</dbReference>
<dbReference type="NCBIfam" id="NF002988">
    <property type="entry name" value="PRK03731.1"/>
    <property type="match status" value="1"/>
</dbReference>
<dbReference type="PANTHER" id="PTHR21087">
    <property type="entry name" value="SHIKIMATE KINASE"/>
    <property type="match status" value="1"/>
</dbReference>
<dbReference type="PANTHER" id="PTHR21087:SF21">
    <property type="entry name" value="SHIKIMATE KINASE 2"/>
    <property type="match status" value="1"/>
</dbReference>
<dbReference type="Pfam" id="PF01202">
    <property type="entry name" value="SKI"/>
    <property type="match status" value="1"/>
</dbReference>
<dbReference type="PRINTS" id="PR01100">
    <property type="entry name" value="SHIKIMTKNASE"/>
</dbReference>
<dbReference type="SUPFAM" id="SSF52540">
    <property type="entry name" value="P-loop containing nucleoside triphosphate hydrolases"/>
    <property type="match status" value="1"/>
</dbReference>
<dbReference type="PROSITE" id="PS01128">
    <property type="entry name" value="SHIKIMATE_KINASE"/>
    <property type="match status" value="1"/>
</dbReference>
<accession>B2K6Q9</accession>
<reference key="1">
    <citation type="submission" date="2008-04" db="EMBL/GenBank/DDBJ databases">
        <title>Complete sequence of Yersinia pseudotuberculosis PB1/+.</title>
        <authorList>
            <person name="Copeland A."/>
            <person name="Lucas S."/>
            <person name="Lapidus A."/>
            <person name="Glavina del Rio T."/>
            <person name="Dalin E."/>
            <person name="Tice H."/>
            <person name="Bruce D."/>
            <person name="Goodwin L."/>
            <person name="Pitluck S."/>
            <person name="Munk A.C."/>
            <person name="Brettin T."/>
            <person name="Detter J.C."/>
            <person name="Han C."/>
            <person name="Tapia R."/>
            <person name="Schmutz J."/>
            <person name="Larimer F."/>
            <person name="Land M."/>
            <person name="Hauser L."/>
            <person name="Challacombe J.F."/>
            <person name="Green L."/>
            <person name="Lindler L.E."/>
            <person name="Nikolich M.P."/>
            <person name="Richardson P."/>
        </authorList>
    </citation>
    <scope>NUCLEOTIDE SEQUENCE [LARGE SCALE GENOMIC DNA]</scope>
    <source>
        <strain>PB1/+</strain>
    </source>
</reference>